<feature type="chain" id="PRO_0000203790" description="Hut operon positive regulatory protein">
    <location>
        <begin position="1"/>
        <end position="147"/>
    </location>
</feature>
<organism>
    <name type="scientific">Halalkalibacterium halodurans (strain ATCC BAA-125 / DSM 18197 / FERM 7344 / JCM 9153 / C-125)</name>
    <name type="common">Bacillus halodurans</name>
    <dbReference type="NCBI Taxonomy" id="272558"/>
    <lineage>
        <taxon>Bacteria</taxon>
        <taxon>Bacillati</taxon>
        <taxon>Bacillota</taxon>
        <taxon>Bacilli</taxon>
        <taxon>Bacillales</taxon>
        <taxon>Bacillaceae</taxon>
        <taxon>Halalkalibacterium (ex Joshi et al. 2022)</taxon>
    </lineage>
</organism>
<evidence type="ECO:0000250" key="1"/>
<evidence type="ECO:0000305" key="2"/>
<keyword id="KW-0010">Activator</keyword>
<keyword id="KW-0369">Histidine metabolism</keyword>
<keyword id="KW-1185">Reference proteome</keyword>
<keyword id="KW-0694">RNA-binding</keyword>
<keyword id="KW-0804">Transcription</keyword>
<keyword id="KW-0805">Transcription regulation</keyword>
<dbReference type="EMBL" id="BA000004">
    <property type="protein sequence ID" value="BAB05700.1"/>
    <property type="molecule type" value="Genomic_DNA"/>
</dbReference>
<dbReference type="PIR" id="E83897">
    <property type="entry name" value="E83897"/>
</dbReference>
<dbReference type="RefSeq" id="WP_010898139.1">
    <property type="nucleotide sequence ID" value="NC_002570.2"/>
</dbReference>
<dbReference type="SMR" id="Q9KBE7"/>
<dbReference type="STRING" id="272558.gene:10727879"/>
<dbReference type="GeneID" id="87597567"/>
<dbReference type="KEGG" id="bha:BH1981"/>
<dbReference type="eggNOG" id="ENOG502ZFIH">
    <property type="taxonomic scope" value="Bacteria"/>
</dbReference>
<dbReference type="HOGENOM" id="CLU_148478_0_0_9"/>
<dbReference type="OrthoDB" id="2388985at2"/>
<dbReference type="Proteomes" id="UP000001258">
    <property type="component" value="Chromosome"/>
</dbReference>
<dbReference type="GO" id="GO:0003729">
    <property type="term" value="F:mRNA binding"/>
    <property type="evidence" value="ECO:0007669"/>
    <property type="project" value="UniProtKB-UniRule"/>
</dbReference>
<dbReference type="GO" id="GO:0006547">
    <property type="term" value="P:L-histidine metabolic process"/>
    <property type="evidence" value="ECO:0007669"/>
    <property type="project" value="UniProtKB-UniRule"/>
</dbReference>
<dbReference type="GO" id="GO:0010628">
    <property type="term" value="P:positive regulation of gene expression"/>
    <property type="evidence" value="ECO:0007669"/>
    <property type="project" value="UniProtKB-UniRule"/>
</dbReference>
<dbReference type="Gene3D" id="3.40.1510.10">
    <property type="entry name" value="Hut operon regulatory protein HutP"/>
    <property type="match status" value="1"/>
</dbReference>
<dbReference type="HAMAP" id="MF_00779">
    <property type="entry name" value="HutP"/>
    <property type="match status" value="1"/>
</dbReference>
<dbReference type="InterPro" id="IPR015111">
    <property type="entry name" value="Regulatory_HutP"/>
</dbReference>
<dbReference type="InterPro" id="IPR023552">
    <property type="entry name" value="Regulatory_HutP_bacillales"/>
</dbReference>
<dbReference type="InterPro" id="IPR036482">
    <property type="entry name" value="Regulatory_HutP_sf"/>
</dbReference>
<dbReference type="NCBIfam" id="NF002838">
    <property type="entry name" value="PRK03065.1"/>
    <property type="match status" value="1"/>
</dbReference>
<dbReference type="Pfam" id="PF09021">
    <property type="entry name" value="HutP"/>
    <property type="match status" value="1"/>
</dbReference>
<dbReference type="SUPFAM" id="SSF111064">
    <property type="entry name" value="Hut operon positive regulatory protein HutP"/>
    <property type="match status" value="1"/>
</dbReference>
<reference key="1">
    <citation type="journal article" date="2000" name="Nucleic Acids Res.">
        <title>Complete genome sequence of the alkaliphilic bacterium Bacillus halodurans and genomic sequence comparison with Bacillus subtilis.</title>
        <authorList>
            <person name="Takami H."/>
            <person name="Nakasone K."/>
            <person name="Takaki Y."/>
            <person name="Maeno G."/>
            <person name="Sasaki R."/>
            <person name="Masui N."/>
            <person name="Fuji F."/>
            <person name="Hirama C."/>
            <person name="Nakamura Y."/>
            <person name="Ogasawara N."/>
            <person name="Kuhara S."/>
            <person name="Horikoshi K."/>
        </authorList>
    </citation>
    <scope>NUCLEOTIDE SEQUENCE [LARGE SCALE GENOMIC DNA]</scope>
    <source>
        <strain>ATCC BAA-125 / DSM 18197 / FERM 7344 / JCM 9153 / C-125</strain>
    </source>
</reference>
<gene>
    <name type="primary">hutP</name>
    <name type="ordered locus">BH1981</name>
</gene>
<comment type="function">
    <text evidence="1">Antiterminator that binds to cis-acting regulatory sequences on the mRNA in the presence of histidine, thereby suppressing transcription termination and activating the hut operon for histidine utilization.</text>
</comment>
<comment type="subunit">
    <text evidence="1">Homohexamer.</text>
</comment>
<comment type="similarity">
    <text evidence="2">Belongs to the HutP family.</text>
</comment>
<name>HUTP_HALH5</name>
<proteinExistence type="inferred from homology"/>
<accession>Q9KBE7</accession>
<sequence length="147" mass="15917">MSKHKSHRIGQLAILLAVSEEPGIVEASILSSDYQSCIGRVGSMESNKIVAAIETAAKKNGFIREGVYREAHALYHAIIEALHGVTRGQVQLGSFQRTVGLRFAIVRGKPYKEEAEGEWIAVALYGTIGAPIKGQEHETIGLGINHI</sequence>
<protein>
    <recommendedName>
        <fullName>Hut operon positive regulatory protein</fullName>
    </recommendedName>
</protein>